<organism>
    <name type="scientific">Mycoplasmoides gallisepticum (strain R(low / passage 15 / clone 2))</name>
    <name type="common">Mycoplasma gallisepticum</name>
    <dbReference type="NCBI Taxonomy" id="710127"/>
    <lineage>
        <taxon>Bacteria</taxon>
        <taxon>Bacillati</taxon>
        <taxon>Mycoplasmatota</taxon>
        <taxon>Mycoplasmoidales</taxon>
        <taxon>Mycoplasmoidaceae</taxon>
        <taxon>Mycoplasmoides</taxon>
    </lineage>
</organism>
<keyword id="KW-1185">Reference proteome</keyword>
<keyword id="KW-0687">Ribonucleoprotein</keyword>
<keyword id="KW-0689">Ribosomal protein</keyword>
<keyword id="KW-0694">RNA-binding</keyword>
<keyword id="KW-0699">rRNA-binding</keyword>
<proteinExistence type="inferred from homology"/>
<sequence length="207" mass="23683">MSRYTGSIYRKARRLNFSILESGKEFTNNKSKKGVKVPGQHGSLIRPKLSNYGEQLQEKQKMQFMYGLNDRQFRRLFAVSKKMSGILTMNLFRTLESRLDNLVFRMGFAPTRRGARQLVSHGHVLVNGKTFDIPSALISLGSVVELKPRAHNLPLVKLALESKAVAPFVEVNKKTLSGTYVRYPERNELPADVNETYVVEYYKRLVK</sequence>
<comment type="function">
    <text evidence="1">One of the primary rRNA binding proteins, it binds directly to 16S rRNA where it nucleates assembly of the body of the 30S subunit.</text>
</comment>
<comment type="function">
    <text evidence="1">With S5 and S12 plays an important role in translational accuracy.</text>
</comment>
<comment type="subunit">
    <text evidence="1">Part of the 30S ribosomal subunit. Contacts protein S5. The interaction surface between S4 and S5 is involved in control of translational fidelity.</text>
</comment>
<comment type="similarity">
    <text evidence="1">Belongs to the universal ribosomal protein uS4 family.</text>
</comment>
<accession>Q7NAV0</accession>
<protein>
    <recommendedName>
        <fullName evidence="1">Small ribosomal subunit protein uS4</fullName>
    </recommendedName>
    <alternativeName>
        <fullName evidence="2">30S ribosomal protein S4</fullName>
    </alternativeName>
</protein>
<gene>
    <name evidence="1" type="primary">rpsD</name>
    <name evidence="1" type="synonym">rps4</name>
    <name type="ordered locus">MYCGA5350</name>
    <name type="ORF">MGA_0264</name>
</gene>
<evidence type="ECO:0000255" key="1">
    <source>
        <dbReference type="HAMAP-Rule" id="MF_01306"/>
    </source>
</evidence>
<evidence type="ECO:0000305" key="2"/>
<dbReference type="EMBL" id="AE015450">
    <property type="protein sequence ID" value="AAP56885.1"/>
    <property type="molecule type" value="Genomic_DNA"/>
</dbReference>
<dbReference type="RefSeq" id="WP_011113789.1">
    <property type="nucleotide sequence ID" value="NC_004829.2"/>
</dbReference>
<dbReference type="SMR" id="Q7NAV0"/>
<dbReference type="KEGG" id="mga:MGA_0264"/>
<dbReference type="HOGENOM" id="CLU_092403_0_1_14"/>
<dbReference type="OrthoDB" id="9803672at2"/>
<dbReference type="Proteomes" id="UP000001418">
    <property type="component" value="Chromosome"/>
</dbReference>
<dbReference type="GO" id="GO:0015935">
    <property type="term" value="C:small ribosomal subunit"/>
    <property type="evidence" value="ECO:0007669"/>
    <property type="project" value="InterPro"/>
</dbReference>
<dbReference type="GO" id="GO:0019843">
    <property type="term" value="F:rRNA binding"/>
    <property type="evidence" value="ECO:0007669"/>
    <property type="project" value="UniProtKB-UniRule"/>
</dbReference>
<dbReference type="GO" id="GO:0003735">
    <property type="term" value="F:structural constituent of ribosome"/>
    <property type="evidence" value="ECO:0007669"/>
    <property type="project" value="InterPro"/>
</dbReference>
<dbReference type="GO" id="GO:0042274">
    <property type="term" value="P:ribosomal small subunit biogenesis"/>
    <property type="evidence" value="ECO:0007669"/>
    <property type="project" value="TreeGrafter"/>
</dbReference>
<dbReference type="GO" id="GO:0006412">
    <property type="term" value="P:translation"/>
    <property type="evidence" value="ECO:0007669"/>
    <property type="project" value="UniProtKB-UniRule"/>
</dbReference>
<dbReference type="CDD" id="cd00165">
    <property type="entry name" value="S4"/>
    <property type="match status" value="1"/>
</dbReference>
<dbReference type="FunFam" id="3.10.290.10:FF:000001">
    <property type="entry name" value="30S ribosomal protein S4"/>
    <property type="match status" value="1"/>
</dbReference>
<dbReference type="Gene3D" id="1.10.1050.10">
    <property type="entry name" value="Ribosomal Protein S4 Delta 41, Chain A, domain 1"/>
    <property type="match status" value="1"/>
</dbReference>
<dbReference type="Gene3D" id="3.10.290.10">
    <property type="entry name" value="RNA-binding S4 domain"/>
    <property type="match status" value="1"/>
</dbReference>
<dbReference type="HAMAP" id="MF_01306_B">
    <property type="entry name" value="Ribosomal_uS4_B"/>
    <property type="match status" value="1"/>
</dbReference>
<dbReference type="InterPro" id="IPR022801">
    <property type="entry name" value="Ribosomal_uS4"/>
</dbReference>
<dbReference type="InterPro" id="IPR005709">
    <property type="entry name" value="Ribosomal_uS4_bac-type"/>
</dbReference>
<dbReference type="InterPro" id="IPR018079">
    <property type="entry name" value="Ribosomal_uS4_CS"/>
</dbReference>
<dbReference type="InterPro" id="IPR001912">
    <property type="entry name" value="Ribosomal_uS4_N"/>
</dbReference>
<dbReference type="InterPro" id="IPR002942">
    <property type="entry name" value="S4_RNA-bd"/>
</dbReference>
<dbReference type="InterPro" id="IPR036986">
    <property type="entry name" value="S4_RNA-bd_sf"/>
</dbReference>
<dbReference type="NCBIfam" id="NF003717">
    <property type="entry name" value="PRK05327.1"/>
    <property type="match status" value="1"/>
</dbReference>
<dbReference type="NCBIfam" id="TIGR01017">
    <property type="entry name" value="rpsD_bact"/>
    <property type="match status" value="1"/>
</dbReference>
<dbReference type="PANTHER" id="PTHR11831">
    <property type="entry name" value="30S 40S RIBOSOMAL PROTEIN"/>
    <property type="match status" value="1"/>
</dbReference>
<dbReference type="PANTHER" id="PTHR11831:SF4">
    <property type="entry name" value="SMALL RIBOSOMAL SUBUNIT PROTEIN US4M"/>
    <property type="match status" value="1"/>
</dbReference>
<dbReference type="Pfam" id="PF00163">
    <property type="entry name" value="Ribosomal_S4"/>
    <property type="match status" value="1"/>
</dbReference>
<dbReference type="Pfam" id="PF01479">
    <property type="entry name" value="S4"/>
    <property type="match status" value="1"/>
</dbReference>
<dbReference type="SMART" id="SM01390">
    <property type="entry name" value="Ribosomal_S4"/>
    <property type="match status" value="1"/>
</dbReference>
<dbReference type="SMART" id="SM00363">
    <property type="entry name" value="S4"/>
    <property type="match status" value="1"/>
</dbReference>
<dbReference type="SUPFAM" id="SSF55174">
    <property type="entry name" value="Alpha-L RNA-binding motif"/>
    <property type="match status" value="1"/>
</dbReference>
<dbReference type="PROSITE" id="PS00632">
    <property type="entry name" value="RIBOSOMAL_S4"/>
    <property type="match status" value="1"/>
</dbReference>
<dbReference type="PROSITE" id="PS50889">
    <property type="entry name" value="S4"/>
    <property type="match status" value="1"/>
</dbReference>
<feature type="chain" id="PRO_0000132412" description="Small ribosomal subunit protein uS4">
    <location>
        <begin position="1"/>
        <end position="207"/>
    </location>
</feature>
<feature type="domain" description="S4 RNA-binding" evidence="1">
    <location>
        <begin position="97"/>
        <end position="165"/>
    </location>
</feature>
<name>RS4_MYCGA</name>
<reference key="1">
    <citation type="journal article" date="2003" name="Microbiology">
        <title>The complete genome sequence of the avian pathogen Mycoplasma gallisepticum strain R(low).</title>
        <authorList>
            <person name="Papazisi L."/>
            <person name="Gorton T.S."/>
            <person name="Kutish G."/>
            <person name="Markham P.F."/>
            <person name="Browning G.F."/>
            <person name="Nguyen D.K."/>
            <person name="Swartzell S."/>
            <person name="Madan A."/>
            <person name="Mahairas G."/>
            <person name="Geary S.J."/>
        </authorList>
    </citation>
    <scope>NUCLEOTIDE SEQUENCE [LARGE SCALE GENOMIC DNA]</scope>
    <source>
        <strain>R(low / passage 15 / clone 2)</strain>
    </source>
</reference>